<sequence>MRMEKTTDKPLSAGDMNDEYSRGPIDDIDCLNFFERAVQDPCCEACDTEDADEELRAKLSSFNFQPDSSPCNAKCQQTLNPLCKIDEGLPAESELAPSRNGSVSEANSDTNSIASTVHDPVDSKYGGMPSLRKAKTTSYFTSSSSNNTTMRNPLKKCNTNINGLLVNRRSSSSSRQSIPELFSGACTKKKNNVLLKSETPNSEFSTNSLQHCNSRSFSLPRSRSRSSAIAIPTHLYGLEKYVSPELDTLTADPEESIERFSNNRPREISSCCPNDTGDTSSSLSHSNTSSSLNFPLGTNTNQFHQPRQPVQQQQSSKPNFGAGRKKSFIEMSLASSFAG</sequence>
<name>MBR1_YEAS1</name>
<dbReference type="EMBL" id="CH408051">
    <property type="protein sequence ID" value="EDV13004.1"/>
    <property type="molecule type" value="Genomic_DNA"/>
</dbReference>
<dbReference type="HOGENOM" id="CLU_778649_0_0_1"/>
<dbReference type="OrthoDB" id="33491at4893"/>
<dbReference type="Proteomes" id="UP000008335">
    <property type="component" value="Unassembled WGS sequence"/>
</dbReference>
<dbReference type="GO" id="GO:0005739">
    <property type="term" value="C:mitochondrion"/>
    <property type="evidence" value="ECO:0007669"/>
    <property type="project" value="UniProtKB-SubCell"/>
</dbReference>
<dbReference type="InterPro" id="IPR031443">
    <property type="entry name" value="Mbr1"/>
</dbReference>
<dbReference type="Pfam" id="PF17058">
    <property type="entry name" value="MBR1"/>
    <property type="match status" value="1"/>
</dbReference>
<feature type="chain" id="PRO_0000408861" description="Mitochondrial biogenesis regulation protein 1">
    <location>
        <begin position="1"/>
        <end position="339"/>
    </location>
</feature>
<feature type="region of interest" description="Disordered" evidence="3">
    <location>
        <begin position="1"/>
        <end position="20"/>
    </location>
</feature>
<feature type="region of interest" description="Disordered" evidence="3">
    <location>
        <begin position="93"/>
        <end position="156"/>
    </location>
</feature>
<feature type="region of interest" description="Disordered" evidence="3">
    <location>
        <begin position="199"/>
        <end position="224"/>
    </location>
</feature>
<feature type="region of interest" description="Disordered" evidence="3">
    <location>
        <begin position="258"/>
        <end position="325"/>
    </location>
</feature>
<feature type="compositionally biased region" description="Polar residues" evidence="3">
    <location>
        <begin position="99"/>
        <end position="115"/>
    </location>
</feature>
<feature type="compositionally biased region" description="Low complexity" evidence="3">
    <location>
        <begin position="136"/>
        <end position="149"/>
    </location>
</feature>
<feature type="compositionally biased region" description="Polar residues" evidence="3">
    <location>
        <begin position="199"/>
        <end position="213"/>
    </location>
</feature>
<feature type="compositionally biased region" description="Low complexity" evidence="3">
    <location>
        <begin position="214"/>
        <end position="224"/>
    </location>
</feature>
<feature type="compositionally biased region" description="Low complexity" evidence="3">
    <location>
        <begin position="279"/>
        <end position="293"/>
    </location>
</feature>
<feature type="compositionally biased region" description="Low complexity" evidence="3">
    <location>
        <begin position="302"/>
        <end position="314"/>
    </location>
</feature>
<feature type="modified residue" description="Phosphothreonine" evidence="2">
    <location>
        <position position="159"/>
    </location>
</feature>
<feature type="modified residue" description="Phosphoserine" evidence="2">
    <location>
        <position position="177"/>
    </location>
</feature>
<feature type="modified residue" description="Phosphoserine" evidence="2">
    <location>
        <position position="224"/>
    </location>
</feature>
<feature type="modified residue" description="Phosphoserine" evidence="2">
    <location>
        <position position="227"/>
    </location>
</feature>
<protein>
    <recommendedName>
        <fullName>Mitochondrial biogenesis regulation protein 1</fullName>
    </recommendedName>
</protein>
<gene>
    <name type="primary">MBR1</name>
    <name type="ORF">SCRG_03928</name>
</gene>
<evidence type="ECO:0000250" key="1"/>
<evidence type="ECO:0000250" key="2">
    <source>
        <dbReference type="UniProtKB" id="P23493"/>
    </source>
</evidence>
<evidence type="ECO:0000256" key="3">
    <source>
        <dbReference type="SAM" id="MobiDB-lite"/>
    </source>
</evidence>
<evidence type="ECO:0000305" key="4"/>
<organism>
    <name type="scientific">Saccharomyces cerevisiae (strain RM11-1a)</name>
    <name type="common">Baker's yeast</name>
    <dbReference type="NCBI Taxonomy" id="285006"/>
    <lineage>
        <taxon>Eukaryota</taxon>
        <taxon>Fungi</taxon>
        <taxon>Dikarya</taxon>
        <taxon>Ascomycota</taxon>
        <taxon>Saccharomycotina</taxon>
        <taxon>Saccharomycetes</taxon>
        <taxon>Saccharomycetales</taxon>
        <taxon>Saccharomycetaceae</taxon>
        <taxon>Saccharomyces</taxon>
    </lineage>
</organism>
<reference key="1">
    <citation type="submission" date="2005-03" db="EMBL/GenBank/DDBJ databases">
        <title>Annotation of the Saccharomyces cerevisiae RM11-1a genome.</title>
        <authorList>
            <consortium name="The Broad Institute Genome Sequencing Platform"/>
            <person name="Birren B.W."/>
            <person name="Lander E.S."/>
            <person name="Galagan J.E."/>
            <person name="Nusbaum C."/>
            <person name="Devon K."/>
            <person name="Cuomo C."/>
            <person name="Jaffe D.B."/>
            <person name="Butler J."/>
            <person name="Alvarez P."/>
            <person name="Gnerre S."/>
            <person name="Grabherr M."/>
            <person name="Kleber M."/>
            <person name="Mauceli E.W."/>
            <person name="Brockman W."/>
            <person name="MacCallum I.A."/>
            <person name="Rounsley S."/>
            <person name="Young S.K."/>
            <person name="LaButti K."/>
            <person name="Pushparaj V."/>
            <person name="DeCaprio D."/>
            <person name="Crawford M."/>
            <person name="Koehrsen M."/>
            <person name="Engels R."/>
            <person name="Montgomery P."/>
            <person name="Pearson M."/>
            <person name="Howarth C."/>
            <person name="Larson L."/>
            <person name="Luoma S."/>
            <person name="White J."/>
            <person name="O'Leary S."/>
            <person name="Kodira C.D."/>
            <person name="Zeng Q."/>
            <person name="Yandava C."/>
            <person name="Alvarado L."/>
            <person name="Pratt S."/>
            <person name="Kruglyak L."/>
        </authorList>
    </citation>
    <scope>NUCLEOTIDE SEQUENCE [LARGE SCALE GENOMIC DNA]</scope>
    <source>
        <strain>RM11-1a</strain>
    </source>
</reference>
<keyword id="KW-0496">Mitochondrion</keyword>
<keyword id="KW-0597">Phosphoprotein</keyword>
<keyword id="KW-0346">Stress response</keyword>
<accession>B3LR01</accession>
<comment type="function">
    <text evidence="1">Participates in mitochondrial biogenesis and stress response.</text>
</comment>
<comment type="subcellular location">
    <subcellularLocation>
        <location evidence="4">Mitochondrion</location>
    </subcellularLocation>
</comment>
<comment type="similarity">
    <text evidence="4">Belongs to the ISF1/MBR1 family.</text>
</comment>
<proteinExistence type="inferred from homology"/>